<sequence length="189" mass="21212">MQAFKKLTSSAIPLWLSDIDTDMIIPANFLTQTTKDGYGKSLFHNLKEKDSSFVFNNPDYSNSEILIAGDNFGCGSSREHAVWALTQAGIKVIIAPSFSDIFFNNAAKNGLLLISLDKDTVKELCDKAEDPKFSMTIDLQEQTVSADGSIYSFDYDPFRKDCLIRGLDDMTYLIEHLDIIKQFEQSQRG</sequence>
<comment type="function">
    <text evidence="1">Catalyzes the isomerization between 2-isopropylmalate and 3-isopropylmalate, via the formation of 2-isopropylmaleate.</text>
</comment>
<comment type="catalytic activity">
    <reaction evidence="1">
        <text>(2R,3S)-3-isopropylmalate = (2S)-2-isopropylmalate</text>
        <dbReference type="Rhea" id="RHEA:32287"/>
        <dbReference type="ChEBI" id="CHEBI:1178"/>
        <dbReference type="ChEBI" id="CHEBI:35121"/>
        <dbReference type="EC" id="4.2.1.33"/>
    </reaction>
</comment>
<comment type="pathway">
    <text evidence="1">Amino-acid biosynthesis; L-leucine biosynthesis; L-leucine from 3-methyl-2-oxobutanoate: step 2/4.</text>
</comment>
<comment type="subunit">
    <text evidence="1">Heterodimer of LeuC and LeuD.</text>
</comment>
<comment type="similarity">
    <text evidence="1">Belongs to the LeuD family. LeuD type 1 subfamily.</text>
</comment>
<gene>
    <name evidence="1" type="primary">leuD</name>
    <name type="ordered locus">FTA_1998</name>
</gene>
<feature type="chain" id="PRO_1000063765" description="3-isopropylmalate dehydratase small subunit">
    <location>
        <begin position="1"/>
        <end position="189"/>
    </location>
</feature>
<keyword id="KW-0028">Amino-acid biosynthesis</keyword>
<keyword id="KW-0100">Branched-chain amino acid biosynthesis</keyword>
<keyword id="KW-0432">Leucine biosynthesis</keyword>
<keyword id="KW-0456">Lyase</keyword>
<organism>
    <name type="scientific">Francisella tularensis subsp. holarctica (strain FTNF002-00 / FTA)</name>
    <dbReference type="NCBI Taxonomy" id="458234"/>
    <lineage>
        <taxon>Bacteria</taxon>
        <taxon>Pseudomonadati</taxon>
        <taxon>Pseudomonadota</taxon>
        <taxon>Gammaproteobacteria</taxon>
        <taxon>Thiotrichales</taxon>
        <taxon>Francisellaceae</taxon>
        <taxon>Francisella</taxon>
    </lineage>
</organism>
<reference key="1">
    <citation type="journal article" date="2009" name="PLoS ONE">
        <title>Complete genome sequence of Francisella tularensis subspecies holarctica FTNF002-00.</title>
        <authorList>
            <person name="Barabote R.D."/>
            <person name="Xie G."/>
            <person name="Brettin T.S."/>
            <person name="Hinrichs S.H."/>
            <person name="Fey P.D."/>
            <person name="Jay J.J."/>
            <person name="Engle J.L."/>
            <person name="Godbole S.D."/>
            <person name="Noronha J.M."/>
            <person name="Scheuermann R.H."/>
            <person name="Zhou L.W."/>
            <person name="Lion C."/>
            <person name="Dempsey M.P."/>
        </authorList>
    </citation>
    <scope>NUCLEOTIDE SEQUENCE [LARGE SCALE GENOMIC DNA]</scope>
    <source>
        <strain>FTNF002-00 / FTA</strain>
    </source>
</reference>
<protein>
    <recommendedName>
        <fullName evidence="1">3-isopropylmalate dehydratase small subunit</fullName>
        <ecNumber evidence="1">4.2.1.33</ecNumber>
    </recommendedName>
    <alternativeName>
        <fullName evidence="1">Alpha-IPM isomerase</fullName>
        <shortName evidence="1">IPMI</shortName>
    </alternativeName>
    <alternativeName>
        <fullName evidence="1">Isopropylmalate isomerase</fullName>
    </alternativeName>
</protein>
<name>LEUD_FRATF</name>
<proteinExistence type="inferred from homology"/>
<dbReference type="EC" id="4.2.1.33" evidence="1"/>
<dbReference type="EMBL" id="CP000803">
    <property type="protein sequence ID" value="ABU62473.1"/>
    <property type="molecule type" value="Genomic_DNA"/>
</dbReference>
<dbReference type="RefSeq" id="WP_003017457.1">
    <property type="nucleotide sequence ID" value="NC_009749.1"/>
</dbReference>
<dbReference type="SMR" id="A7NES0"/>
<dbReference type="GeneID" id="75264441"/>
<dbReference type="KEGG" id="fta:FTA_1998"/>
<dbReference type="HOGENOM" id="CLU_081378_0_3_6"/>
<dbReference type="UniPathway" id="UPA00048">
    <property type="reaction ID" value="UER00071"/>
</dbReference>
<dbReference type="GO" id="GO:0009316">
    <property type="term" value="C:3-isopropylmalate dehydratase complex"/>
    <property type="evidence" value="ECO:0007669"/>
    <property type="project" value="InterPro"/>
</dbReference>
<dbReference type="GO" id="GO:0003861">
    <property type="term" value="F:3-isopropylmalate dehydratase activity"/>
    <property type="evidence" value="ECO:0007669"/>
    <property type="project" value="UniProtKB-UniRule"/>
</dbReference>
<dbReference type="GO" id="GO:0009098">
    <property type="term" value="P:L-leucine biosynthetic process"/>
    <property type="evidence" value="ECO:0007669"/>
    <property type="project" value="UniProtKB-UniRule"/>
</dbReference>
<dbReference type="CDD" id="cd01577">
    <property type="entry name" value="IPMI_Swivel"/>
    <property type="match status" value="1"/>
</dbReference>
<dbReference type="FunFam" id="3.20.19.10:FF:000003">
    <property type="entry name" value="3-isopropylmalate dehydratase small subunit"/>
    <property type="match status" value="1"/>
</dbReference>
<dbReference type="Gene3D" id="3.20.19.10">
    <property type="entry name" value="Aconitase, domain 4"/>
    <property type="match status" value="1"/>
</dbReference>
<dbReference type="HAMAP" id="MF_01031">
    <property type="entry name" value="LeuD_type1"/>
    <property type="match status" value="1"/>
</dbReference>
<dbReference type="InterPro" id="IPR004431">
    <property type="entry name" value="3-IsopropMal_deHydase_ssu"/>
</dbReference>
<dbReference type="InterPro" id="IPR015928">
    <property type="entry name" value="Aconitase/3IPM_dehydase_swvl"/>
</dbReference>
<dbReference type="InterPro" id="IPR000573">
    <property type="entry name" value="AconitaseA/IPMdHydase_ssu_swvl"/>
</dbReference>
<dbReference type="InterPro" id="IPR033940">
    <property type="entry name" value="IPMI_Swivel"/>
</dbReference>
<dbReference type="InterPro" id="IPR050075">
    <property type="entry name" value="LeuD"/>
</dbReference>
<dbReference type="NCBIfam" id="TIGR00171">
    <property type="entry name" value="leuD"/>
    <property type="match status" value="1"/>
</dbReference>
<dbReference type="NCBIfam" id="NF002458">
    <property type="entry name" value="PRK01641.1"/>
    <property type="match status" value="1"/>
</dbReference>
<dbReference type="PANTHER" id="PTHR43345:SF5">
    <property type="entry name" value="3-ISOPROPYLMALATE DEHYDRATASE SMALL SUBUNIT"/>
    <property type="match status" value="1"/>
</dbReference>
<dbReference type="PANTHER" id="PTHR43345">
    <property type="entry name" value="3-ISOPROPYLMALATE DEHYDRATASE SMALL SUBUNIT 2-RELATED-RELATED"/>
    <property type="match status" value="1"/>
</dbReference>
<dbReference type="Pfam" id="PF00694">
    <property type="entry name" value="Aconitase_C"/>
    <property type="match status" value="1"/>
</dbReference>
<dbReference type="SUPFAM" id="SSF52016">
    <property type="entry name" value="LeuD/IlvD-like"/>
    <property type="match status" value="1"/>
</dbReference>
<evidence type="ECO:0000255" key="1">
    <source>
        <dbReference type="HAMAP-Rule" id="MF_01031"/>
    </source>
</evidence>
<accession>A7NES0</accession>